<gene>
    <name evidence="1" type="primary">dapB</name>
    <name type="ordered locus">A2cp1_4216</name>
</gene>
<sequence length="270" mass="27722">MTKVVVTGAAGRMGTQIVRLVRATPGLAVSGAVERAGSPAIGKDAGTLAGGEPLGVAVVDDLAKALAGADVVIDFTSHEASVRHAQACAAAGVALVIGSTGFTPDAKAKVAEAARKVPVVLSPNMSVGVNVVFELVRQAARVLGDGYDVEIVEIHHKHKRDAPSGTAVRLGEVAAEALGRAPADALAYTRHGILGERPPWQIGIQTLRGGDVVGEHTVFFCGEGERVEITHRATSREQFARGAARAAAWLPGKPPGVYDMADVLGLRGGK</sequence>
<organism>
    <name type="scientific">Anaeromyxobacter dehalogenans (strain 2CP-1 / ATCC BAA-258)</name>
    <dbReference type="NCBI Taxonomy" id="455488"/>
    <lineage>
        <taxon>Bacteria</taxon>
        <taxon>Pseudomonadati</taxon>
        <taxon>Myxococcota</taxon>
        <taxon>Myxococcia</taxon>
        <taxon>Myxococcales</taxon>
        <taxon>Cystobacterineae</taxon>
        <taxon>Anaeromyxobacteraceae</taxon>
        <taxon>Anaeromyxobacter</taxon>
    </lineage>
</organism>
<reference key="1">
    <citation type="submission" date="2009-01" db="EMBL/GenBank/DDBJ databases">
        <title>Complete sequence of Anaeromyxobacter dehalogenans 2CP-1.</title>
        <authorList>
            <person name="Lucas S."/>
            <person name="Copeland A."/>
            <person name="Lapidus A."/>
            <person name="Glavina del Rio T."/>
            <person name="Dalin E."/>
            <person name="Tice H."/>
            <person name="Bruce D."/>
            <person name="Goodwin L."/>
            <person name="Pitluck S."/>
            <person name="Saunders E."/>
            <person name="Brettin T."/>
            <person name="Detter J.C."/>
            <person name="Han C."/>
            <person name="Larimer F."/>
            <person name="Land M."/>
            <person name="Hauser L."/>
            <person name="Kyrpides N."/>
            <person name="Ovchinnikova G."/>
            <person name="Beliaev A.S."/>
            <person name="Richardson P."/>
        </authorList>
    </citation>
    <scope>NUCLEOTIDE SEQUENCE [LARGE SCALE GENOMIC DNA]</scope>
    <source>
        <strain>2CP-1 / ATCC BAA-258</strain>
    </source>
</reference>
<accession>B8JAN4</accession>
<protein>
    <recommendedName>
        <fullName evidence="1">4-hydroxy-tetrahydrodipicolinate reductase</fullName>
        <shortName evidence="1">HTPA reductase</shortName>
        <ecNumber evidence="1">1.17.1.8</ecNumber>
    </recommendedName>
</protein>
<dbReference type="EC" id="1.17.1.8" evidence="1"/>
<dbReference type="EMBL" id="CP001359">
    <property type="protein sequence ID" value="ACL67533.1"/>
    <property type="molecule type" value="Genomic_DNA"/>
</dbReference>
<dbReference type="RefSeq" id="WP_015935244.1">
    <property type="nucleotide sequence ID" value="NC_011891.1"/>
</dbReference>
<dbReference type="SMR" id="B8JAN4"/>
<dbReference type="KEGG" id="acp:A2cp1_4216"/>
<dbReference type="HOGENOM" id="CLU_047479_2_1_7"/>
<dbReference type="UniPathway" id="UPA00034">
    <property type="reaction ID" value="UER00018"/>
</dbReference>
<dbReference type="Proteomes" id="UP000007089">
    <property type="component" value="Chromosome"/>
</dbReference>
<dbReference type="GO" id="GO:0005829">
    <property type="term" value="C:cytosol"/>
    <property type="evidence" value="ECO:0007669"/>
    <property type="project" value="TreeGrafter"/>
</dbReference>
<dbReference type="GO" id="GO:0008839">
    <property type="term" value="F:4-hydroxy-tetrahydrodipicolinate reductase"/>
    <property type="evidence" value="ECO:0007669"/>
    <property type="project" value="UniProtKB-EC"/>
</dbReference>
<dbReference type="GO" id="GO:0051287">
    <property type="term" value="F:NAD binding"/>
    <property type="evidence" value="ECO:0007669"/>
    <property type="project" value="UniProtKB-UniRule"/>
</dbReference>
<dbReference type="GO" id="GO:0050661">
    <property type="term" value="F:NADP binding"/>
    <property type="evidence" value="ECO:0007669"/>
    <property type="project" value="UniProtKB-UniRule"/>
</dbReference>
<dbReference type="GO" id="GO:0016726">
    <property type="term" value="F:oxidoreductase activity, acting on CH or CH2 groups, NAD or NADP as acceptor"/>
    <property type="evidence" value="ECO:0007669"/>
    <property type="project" value="UniProtKB-UniRule"/>
</dbReference>
<dbReference type="GO" id="GO:0019877">
    <property type="term" value="P:diaminopimelate biosynthetic process"/>
    <property type="evidence" value="ECO:0007669"/>
    <property type="project" value="UniProtKB-UniRule"/>
</dbReference>
<dbReference type="GO" id="GO:0009089">
    <property type="term" value="P:lysine biosynthetic process via diaminopimelate"/>
    <property type="evidence" value="ECO:0007669"/>
    <property type="project" value="UniProtKB-UniRule"/>
</dbReference>
<dbReference type="CDD" id="cd02274">
    <property type="entry name" value="DHDPR_N"/>
    <property type="match status" value="1"/>
</dbReference>
<dbReference type="FunFam" id="3.30.360.10:FF:000004">
    <property type="entry name" value="4-hydroxy-tetrahydrodipicolinate reductase"/>
    <property type="match status" value="1"/>
</dbReference>
<dbReference type="Gene3D" id="3.30.360.10">
    <property type="entry name" value="Dihydrodipicolinate Reductase, domain 2"/>
    <property type="match status" value="1"/>
</dbReference>
<dbReference type="Gene3D" id="3.40.50.720">
    <property type="entry name" value="NAD(P)-binding Rossmann-like Domain"/>
    <property type="match status" value="1"/>
</dbReference>
<dbReference type="HAMAP" id="MF_00102">
    <property type="entry name" value="DapB"/>
    <property type="match status" value="1"/>
</dbReference>
<dbReference type="InterPro" id="IPR022663">
    <property type="entry name" value="DapB_C"/>
</dbReference>
<dbReference type="InterPro" id="IPR000846">
    <property type="entry name" value="DapB_N"/>
</dbReference>
<dbReference type="InterPro" id="IPR022664">
    <property type="entry name" value="DapB_N_CS"/>
</dbReference>
<dbReference type="InterPro" id="IPR023940">
    <property type="entry name" value="DHDPR_bac"/>
</dbReference>
<dbReference type="InterPro" id="IPR036291">
    <property type="entry name" value="NAD(P)-bd_dom_sf"/>
</dbReference>
<dbReference type="NCBIfam" id="TIGR00036">
    <property type="entry name" value="dapB"/>
    <property type="match status" value="1"/>
</dbReference>
<dbReference type="PANTHER" id="PTHR20836:SF0">
    <property type="entry name" value="4-HYDROXY-TETRAHYDRODIPICOLINATE REDUCTASE 1, CHLOROPLASTIC-RELATED"/>
    <property type="match status" value="1"/>
</dbReference>
<dbReference type="PANTHER" id="PTHR20836">
    <property type="entry name" value="DIHYDRODIPICOLINATE REDUCTASE"/>
    <property type="match status" value="1"/>
</dbReference>
<dbReference type="Pfam" id="PF05173">
    <property type="entry name" value="DapB_C"/>
    <property type="match status" value="1"/>
</dbReference>
<dbReference type="Pfam" id="PF01113">
    <property type="entry name" value="DapB_N"/>
    <property type="match status" value="1"/>
</dbReference>
<dbReference type="PIRSF" id="PIRSF000161">
    <property type="entry name" value="DHPR"/>
    <property type="match status" value="1"/>
</dbReference>
<dbReference type="SUPFAM" id="SSF55347">
    <property type="entry name" value="Glyceraldehyde-3-phosphate dehydrogenase-like, C-terminal domain"/>
    <property type="match status" value="1"/>
</dbReference>
<dbReference type="SUPFAM" id="SSF51735">
    <property type="entry name" value="NAD(P)-binding Rossmann-fold domains"/>
    <property type="match status" value="1"/>
</dbReference>
<dbReference type="PROSITE" id="PS01298">
    <property type="entry name" value="DAPB"/>
    <property type="match status" value="1"/>
</dbReference>
<proteinExistence type="inferred from homology"/>
<name>DAPB_ANAD2</name>
<keyword id="KW-0028">Amino-acid biosynthesis</keyword>
<keyword id="KW-0963">Cytoplasm</keyword>
<keyword id="KW-0220">Diaminopimelate biosynthesis</keyword>
<keyword id="KW-0457">Lysine biosynthesis</keyword>
<keyword id="KW-0520">NAD</keyword>
<keyword id="KW-0521">NADP</keyword>
<keyword id="KW-0560">Oxidoreductase</keyword>
<comment type="function">
    <text evidence="1">Catalyzes the conversion of 4-hydroxy-tetrahydrodipicolinate (HTPA) to tetrahydrodipicolinate.</text>
</comment>
<comment type="catalytic activity">
    <reaction evidence="1">
        <text>(S)-2,3,4,5-tetrahydrodipicolinate + NAD(+) + H2O = (2S,4S)-4-hydroxy-2,3,4,5-tetrahydrodipicolinate + NADH + H(+)</text>
        <dbReference type="Rhea" id="RHEA:35323"/>
        <dbReference type="ChEBI" id="CHEBI:15377"/>
        <dbReference type="ChEBI" id="CHEBI:15378"/>
        <dbReference type="ChEBI" id="CHEBI:16845"/>
        <dbReference type="ChEBI" id="CHEBI:57540"/>
        <dbReference type="ChEBI" id="CHEBI:57945"/>
        <dbReference type="ChEBI" id="CHEBI:67139"/>
        <dbReference type="EC" id="1.17.1.8"/>
    </reaction>
</comment>
<comment type="catalytic activity">
    <reaction evidence="1">
        <text>(S)-2,3,4,5-tetrahydrodipicolinate + NADP(+) + H2O = (2S,4S)-4-hydroxy-2,3,4,5-tetrahydrodipicolinate + NADPH + H(+)</text>
        <dbReference type="Rhea" id="RHEA:35331"/>
        <dbReference type="ChEBI" id="CHEBI:15377"/>
        <dbReference type="ChEBI" id="CHEBI:15378"/>
        <dbReference type="ChEBI" id="CHEBI:16845"/>
        <dbReference type="ChEBI" id="CHEBI:57783"/>
        <dbReference type="ChEBI" id="CHEBI:58349"/>
        <dbReference type="ChEBI" id="CHEBI:67139"/>
        <dbReference type="EC" id="1.17.1.8"/>
    </reaction>
</comment>
<comment type="pathway">
    <text evidence="1">Amino-acid biosynthesis; L-lysine biosynthesis via DAP pathway; (S)-tetrahydrodipicolinate from L-aspartate: step 4/4.</text>
</comment>
<comment type="subcellular location">
    <subcellularLocation>
        <location evidence="1">Cytoplasm</location>
    </subcellularLocation>
</comment>
<comment type="similarity">
    <text evidence="1">Belongs to the DapB family.</text>
</comment>
<comment type="caution">
    <text evidence="2">Was originally thought to be a dihydrodipicolinate reductase (DHDPR), catalyzing the conversion of dihydrodipicolinate to tetrahydrodipicolinate. However, it was shown in E.coli that the substrate of the enzymatic reaction is not dihydrodipicolinate (DHDP) but in fact (2S,4S)-4-hydroxy-2,3,4,5-tetrahydrodipicolinic acid (HTPA), the product released by the DapA-catalyzed reaction.</text>
</comment>
<evidence type="ECO:0000255" key="1">
    <source>
        <dbReference type="HAMAP-Rule" id="MF_00102"/>
    </source>
</evidence>
<evidence type="ECO:0000305" key="2"/>
<feature type="chain" id="PRO_1000118838" description="4-hydroxy-tetrahydrodipicolinate reductase">
    <location>
        <begin position="1"/>
        <end position="270"/>
    </location>
</feature>
<feature type="active site" description="Proton donor/acceptor" evidence="1">
    <location>
        <position position="155"/>
    </location>
</feature>
<feature type="active site" description="Proton donor" evidence="1">
    <location>
        <position position="159"/>
    </location>
</feature>
<feature type="binding site" evidence="1">
    <location>
        <begin position="8"/>
        <end position="13"/>
    </location>
    <ligand>
        <name>NAD(+)</name>
        <dbReference type="ChEBI" id="CHEBI:57540"/>
    </ligand>
</feature>
<feature type="binding site" evidence="1">
    <location>
        <position position="34"/>
    </location>
    <ligand>
        <name>NAD(+)</name>
        <dbReference type="ChEBI" id="CHEBI:57540"/>
    </ligand>
</feature>
<feature type="binding site" evidence="1">
    <location>
        <position position="35"/>
    </location>
    <ligand>
        <name>NADP(+)</name>
        <dbReference type="ChEBI" id="CHEBI:58349"/>
    </ligand>
</feature>
<feature type="binding site" evidence="1">
    <location>
        <begin position="98"/>
        <end position="100"/>
    </location>
    <ligand>
        <name>NAD(+)</name>
        <dbReference type="ChEBI" id="CHEBI:57540"/>
    </ligand>
</feature>
<feature type="binding site" evidence="1">
    <location>
        <begin position="122"/>
        <end position="125"/>
    </location>
    <ligand>
        <name>NAD(+)</name>
        <dbReference type="ChEBI" id="CHEBI:57540"/>
    </ligand>
</feature>
<feature type="binding site" evidence="1">
    <location>
        <position position="156"/>
    </location>
    <ligand>
        <name>(S)-2,3,4,5-tetrahydrodipicolinate</name>
        <dbReference type="ChEBI" id="CHEBI:16845"/>
    </ligand>
</feature>
<feature type="binding site" evidence="1">
    <location>
        <begin position="165"/>
        <end position="166"/>
    </location>
    <ligand>
        <name>(S)-2,3,4,5-tetrahydrodipicolinate</name>
        <dbReference type="ChEBI" id="CHEBI:16845"/>
    </ligand>
</feature>